<protein>
    <recommendedName>
        <fullName evidence="1">Hydroxyethylthiazole kinase</fullName>
        <ecNumber evidence="1">2.7.1.50</ecNumber>
    </recommendedName>
    <alternativeName>
        <fullName evidence="1">4-methyl-5-beta-hydroxyethylthiazole kinase</fullName>
        <shortName evidence="1">TH kinase</shortName>
        <shortName evidence="1">Thz kinase</shortName>
    </alternativeName>
</protein>
<reference key="1">
    <citation type="journal article" date="2003" name="Proc. Natl. Acad. Sci. U.S.A.">
        <title>Complete genome sequence of Lactobacillus plantarum WCFS1.</title>
        <authorList>
            <person name="Kleerebezem M."/>
            <person name="Boekhorst J."/>
            <person name="van Kranenburg R."/>
            <person name="Molenaar D."/>
            <person name="Kuipers O.P."/>
            <person name="Leer R."/>
            <person name="Tarchini R."/>
            <person name="Peters S.A."/>
            <person name="Sandbrink H.M."/>
            <person name="Fiers M.W.E.J."/>
            <person name="Stiekema W."/>
            <person name="Klein Lankhorst R.M."/>
            <person name="Bron P.A."/>
            <person name="Hoffer S.M."/>
            <person name="Nierop Groot M.N."/>
            <person name="Kerkhoven R."/>
            <person name="De Vries M."/>
            <person name="Ursing B."/>
            <person name="De Vos W.M."/>
            <person name="Siezen R.J."/>
        </authorList>
    </citation>
    <scope>NUCLEOTIDE SEQUENCE [LARGE SCALE GENOMIC DNA]</scope>
    <source>
        <strain>ATCC BAA-793 / NCIMB 8826 / WCFS1</strain>
    </source>
</reference>
<reference key="2">
    <citation type="journal article" date="2012" name="J. Bacteriol.">
        <title>Complete resequencing and reannotation of the Lactobacillus plantarum WCFS1 genome.</title>
        <authorList>
            <person name="Siezen R.J."/>
            <person name="Francke C."/>
            <person name="Renckens B."/>
            <person name="Boekhorst J."/>
            <person name="Wels M."/>
            <person name="Kleerebezem M."/>
            <person name="van Hijum S.A."/>
        </authorList>
    </citation>
    <scope>NUCLEOTIDE SEQUENCE [LARGE SCALE GENOMIC DNA]</scope>
    <scope>GENOME REANNOTATION</scope>
    <source>
        <strain>ATCC BAA-793 / NCIMB 8826 / WCFS1</strain>
    </source>
</reference>
<comment type="function">
    <text evidence="1">Catalyzes the phosphorylation of the hydroxyl group of 4-methyl-5-beta-hydroxyethylthiazole (THZ).</text>
</comment>
<comment type="catalytic activity">
    <reaction evidence="1">
        <text>5-(2-hydroxyethyl)-4-methylthiazole + ATP = 4-methyl-5-(2-phosphooxyethyl)-thiazole + ADP + H(+)</text>
        <dbReference type="Rhea" id="RHEA:24212"/>
        <dbReference type="ChEBI" id="CHEBI:15378"/>
        <dbReference type="ChEBI" id="CHEBI:17957"/>
        <dbReference type="ChEBI" id="CHEBI:30616"/>
        <dbReference type="ChEBI" id="CHEBI:58296"/>
        <dbReference type="ChEBI" id="CHEBI:456216"/>
        <dbReference type="EC" id="2.7.1.50"/>
    </reaction>
</comment>
<comment type="cofactor">
    <cofactor evidence="1">
        <name>Mg(2+)</name>
        <dbReference type="ChEBI" id="CHEBI:18420"/>
    </cofactor>
</comment>
<comment type="pathway">
    <text evidence="1">Cofactor biosynthesis; thiamine diphosphate biosynthesis; 4-methyl-5-(2-phosphoethyl)-thiazole from 5-(2-hydroxyethyl)-4-methylthiazole: step 1/1.</text>
</comment>
<comment type="similarity">
    <text evidence="1">Belongs to the Thz kinase family.</text>
</comment>
<name>THIM_LACPL</name>
<evidence type="ECO:0000255" key="1">
    <source>
        <dbReference type="HAMAP-Rule" id="MF_00228"/>
    </source>
</evidence>
<proteinExistence type="inferred from homology"/>
<keyword id="KW-0067">ATP-binding</keyword>
<keyword id="KW-0418">Kinase</keyword>
<keyword id="KW-0460">Magnesium</keyword>
<keyword id="KW-0479">Metal-binding</keyword>
<keyword id="KW-0547">Nucleotide-binding</keyword>
<keyword id="KW-1185">Reference proteome</keyword>
<keyword id="KW-0784">Thiamine biosynthesis</keyword>
<keyword id="KW-0808">Transferase</keyword>
<organism>
    <name type="scientific">Lactiplantibacillus plantarum (strain ATCC BAA-793 / NCIMB 8826 / WCFS1)</name>
    <name type="common">Lactobacillus plantarum</name>
    <dbReference type="NCBI Taxonomy" id="220668"/>
    <lineage>
        <taxon>Bacteria</taxon>
        <taxon>Bacillati</taxon>
        <taxon>Bacillota</taxon>
        <taxon>Bacilli</taxon>
        <taxon>Lactobacillales</taxon>
        <taxon>Lactobacillaceae</taxon>
        <taxon>Lactiplantibacillus</taxon>
    </lineage>
</organism>
<sequence>MELQLLNTLRNHNPIVFNIANFVTVQDVANGLNALGASPIMSAEVQEAETMVQIAGAVCINLGTLTTTQIDQMRVVGKLANQYHKPVVLDPVAVGAVPYRKEVALALLSDFQVDVIRGNAGEIAALAGMDWQAKGIDAGSGQGDLVEIAQACAQQFQCCVILSGPTDVITDGQRVVKVANGTPLFQRHVGSGDLLSSIVAAFTAVSPTDVYQAAQVACLVLAGAGELVASQLTADRPATFAIDLIDRLSLVTVSEIQTIAKVD</sequence>
<accession>Q890C2</accession>
<accession>F9UST6</accession>
<gene>
    <name evidence="1" type="primary">thiM</name>
    <name type="ordered locus">lp_0113</name>
</gene>
<feature type="chain" id="PRO_0000156940" description="Hydroxyethylthiazole kinase">
    <location>
        <begin position="1"/>
        <end position="263"/>
    </location>
</feature>
<feature type="binding site" evidence="1">
    <location>
        <position position="41"/>
    </location>
    <ligand>
        <name>substrate</name>
    </ligand>
</feature>
<feature type="binding site" evidence="1">
    <location>
        <position position="117"/>
    </location>
    <ligand>
        <name>ATP</name>
        <dbReference type="ChEBI" id="CHEBI:30616"/>
    </ligand>
</feature>
<feature type="binding site" evidence="1">
    <location>
        <position position="163"/>
    </location>
    <ligand>
        <name>ATP</name>
        <dbReference type="ChEBI" id="CHEBI:30616"/>
    </ligand>
</feature>
<feature type="binding site" evidence="1">
    <location>
        <position position="190"/>
    </location>
    <ligand>
        <name>substrate</name>
    </ligand>
</feature>
<dbReference type="EC" id="2.7.1.50" evidence="1"/>
<dbReference type="EMBL" id="AL935263">
    <property type="protein sequence ID" value="CCC77667.1"/>
    <property type="molecule type" value="Genomic_DNA"/>
</dbReference>
<dbReference type="RefSeq" id="WP_011100886.1">
    <property type="nucleotide sequence ID" value="NC_004567.2"/>
</dbReference>
<dbReference type="RefSeq" id="YP_004888181.1">
    <property type="nucleotide sequence ID" value="NC_004567.2"/>
</dbReference>
<dbReference type="SMR" id="Q890C2"/>
<dbReference type="STRING" id="220668.lp_0113"/>
<dbReference type="EnsemblBacteria" id="CCC77667">
    <property type="protein sequence ID" value="CCC77667"/>
    <property type="gene ID" value="lp_0113"/>
</dbReference>
<dbReference type="KEGG" id="lpl:lp_0113"/>
<dbReference type="PATRIC" id="fig|220668.9.peg.91"/>
<dbReference type="eggNOG" id="COG2145">
    <property type="taxonomic scope" value="Bacteria"/>
</dbReference>
<dbReference type="HOGENOM" id="CLU_019943_0_0_9"/>
<dbReference type="OrthoDB" id="9778146at2"/>
<dbReference type="PhylomeDB" id="Q890C2"/>
<dbReference type="UniPathway" id="UPA00060">
    <property type="reaction ID" value="UER00139"/>
</dbReference>
<dbReference type="Proteomes" id="UP000000432">
    <property type="component" value="Chromosome"/>
</dbReference>
<dbReference type="GO" id="GO:0005524">
    <property type="term" value="F:ATP binding"/>
    <property type="evidence" value="ECO:0007669"/>
    <property type="project" value="UniProtKB-UniRule"/>
</dbReference>
<dbReference type="GO" id="GO:0004417">
    <property type="term" value="F:hydroxyethylthiazole kinase activity"/>
    <property type="evidence" value="ECO:0007669"/>
    <property type="project" value="UniProtKB-UniRule"/>
</dbReference>
<dbReference type="GO" id="GO:0000287">
    <property type="term" value="F:magnesium ion binding"/>
    <property type="evidence" value="ECO:0007669"/>
    <property type="project" value="UniProtKB-UniRule"/>
</dbReference>
<dbReference type="GO" id="GO:0009228">
    <property type="term" value="P:thiamine biosynthetic process"/>
    <property type="evidence" value="ECO:0007669"/>
    <property type="project" value="UniProtKB-KW"/>
</dbReference>
<dbReference type="GO" id="GO:0009229">
    <property type="term" value="P:thiamine diphosphate biosynthetic process"/>
    <property type="evidence" value="ECO:0007669"/>
    <property type="project" value="UniProtKB-UniRule"/>
</dbReference>
<dbReference type="CDD" id="cd01170">
    <property type="entry name" value="THZ_kinase"/>
    <property type="match status" value="1"/>
</dbReference>
<dbReference type="Gene3D" id="3.40.1190.20">
    <property type="match status" value="1"/>
</dbReference>
<dbReference type="HAMAP" id="MF_00228">
    <property type="entry name" value="Thz_kinase"/>
    <property type="match status" value="1"/>
</dbReference>
<dbReference type="InterPro" id="IPR000417">
    <property type="entry name" value="Hyethyz_kinase"/>
</dbReference>
<dbReference type="InterPro" id="IPR029056">
    <property type="entry name" value="Ribokinase-like"/>
</dbReference>
<dbReference type="NCBIfam" id="NF006830">
    <property type="entry name" value="PRK09355.1"/>
    <property type="match status" value="1"/>
</dbReference>
<dbReference type="Pfam" id="PF02110">
    <property type="entry name" value="HK"/>
    <property type="match status" value="1"/>
</dbReference>
<dbReference type="PIRSF" id="PIRSF000513">
    <property type="entry name" value="Thz_kinase"/>
    <property type="match status" value="1"/>
</dbReference>
<dbReference type="PRINTS" id="PR01099">
    <property type="entry name" value="HYETHTZKNASE"/>
</dbReference>
<dbReference type="SUPFAM" id="SSF53613">
    <property type="entry name" value="Ribokinase-like"/>
    <property type="match status" value="1"/>
</dbReference>